<comment type="catalytic activity">
    <reaction evidence="1">
        <text>(6S)-5,6,7,8-tetrahydrofolate + formate + ATP = (6R)-10-formyltetrahydrofolate + ADP + phosphate</text>
        <dbReference type="Rhea" id="RHEA:20221"/>
        <dbReference type="ChEBI" id="CHEBI:15740"/>
        <dbReference type="ChEBI" id="CHEBI:30616"/>
        <dbReference type="ChEBI" id="CHEBI:43474"/>
        <dbReference type="ChEBI" id="CHEBI:57453"/>
        <dbReference type="ChEBI" id="CHEBI:195366"/>
        <dbReference type="ChEBI" id="CHEBI:456216"/>
        <dbReference type="EC" id="6.3.4.3"/>
    </reaction>
</comment>
<comment type="pathway">
    <text evidence="1">One-carbon metabolism; tetrahydrofolate interconversion.</text>
</comment>
<comment type="similarity">
    <text evidence="1">Belongs to the formate--tetrahydrofolate ligase family.</text>
</comment>
<reference key="1">
    <citation type="journal article" date="2004" name="Proc. Natl. Acad. Sci. U.S.A.">
        <title>Complete genomes of two clinical Staphylococcus aureus strains: evidence for the rapid evolution of virulence and drug resistance.</title>
        <authorList>
            <person name="Holden M.T.G."/>
            <person name="Feil E.J."/>
            <person name="Lindsay J.A."/>
            <person name="Peacock S.J."/>
            <person name="Day N.P.J."/>
            <person name="Enright M.C."/>
            <person name="Foster T.J."/>
            <person name="Moore C.E."/>
            <person name="Hurst L."/>
            <person name="Atkin R."/>
            <person name="Barron A."/>
            <person name="Bason N."/>
            <person name="Bentley S.D."/>
            <person name="Chillingworth C."/>
            <person name="Chillingworth T."/>
            <person name="Churcher C."/>
            <person name="Clark L."/>
            <person name="Corton C."/>
            <person name="Cronin A."/>
            <person name="Doggett J."/>
            <person name="Dowd L."/>
            <person name="Feltwell T."/>
            <person name="Hance Z."/>
            <person name="Harris B."/>
            <person name="Hauser H."/>
            <person name="Holroyd S."/>
            <person name="Jagels K."/>
            <person name="James K.D."/>
            <person name="Lennard N."/>
            <person name="Line A."/>
            <person name="Mayes R."/>
            <person name="Moule S."/>
            <person name="Mungall K."/>
            <person name="Ormond D."/>
            <person name="Quail M.A."/>
            <person name="Rabbinowitsch E."/>
            <person name="Rutherford K.M."/>
            <person name="Sanders M."/>
            <person name="Sharp S."/>
            <person name="Simmonds M."/>
            <person name="Stevens K."/>
            <person name="Whitehead S."/>
            <person name="Barrell B.G."/>
            <person name="Spratt B.G."/>
            <person name="Parkhill J."/>
        </authorList>
    </citation>
    <scope>NUCLEOTIDE SEQUENCE [LARGE SCALE GENOMIC DNA]</scope>
    <source>
        <strain>MRSA252</strain>
    </source>
</reference>
<name>FTHS_STAAR</name>
<protein>
    <recommendedName>
        <fullName evidence="1">Formate--tetrahydrofolate ligase</fullName>
        <ecNumber evidence="1">6.3.4.3</ecNumber>
    </recommendedName>
    <alternativeName>
        <fullName evidence="1">Formyltetrahydrofolate synthetase</fullName>
        <shortName evidence="1">FHS</shortName>
        <shortName evidence="1">FTHFS</shortName>
    </alternativeName>
</protein>
<proteinExistence type="inferred from homology"/>
<accession>Q6GFX6</accession>
<gene>
    <name evidence="1" type="primary">fhs</name>
    <name type="ordered locus">SAR1810</name>
</gene>
<dbReference type="EC" id="6.3.4.3" evidence="1"/>
<dbReference type="EMBL" id="BX571856">
    <property type="protein sequence ID" value="CAG40801.1"/>
    <property type="molecule type" value="Genomic_DNA"/>
</dbReference>
<dbReference type="RefSeq" id="WP_000149412.1">
    <property type="nucleotide sequence ID" value="NC_002952.2"/>
</dbReference>
<dbReference type="SMR" id="Q6GFX6"/>
<dbReference type="KEGG" id="sar:SAR1810"/>
<dbReference type="HOGENOM" id="CLU_003601_3_3_9"/>
<dbReference type="UniPathway" id="UPA00193"/>
<dbReference type="Proteomes" id="UP000000596">
    <property type="component" value="Chromosome"/>
</dbReference>
<dbReference type="GO" id="GO:0005524">
    <property type="term" value="F:ATP binding"/>
    <property type="evidence" value="ECO:0007669"/>
    <property type="project" value="UniProtKB-UniRule"/>
</dbReference>
<dbReference type="GO" id="GO:0004329">
    <property type="term" value="F:formate-tetrahydrofolate ligase activity"/>
    <property type="evidence" value="ECO:0007669"/>
    <property type="project" value="UniProtKB-UniRule"/>
</dbReference>
<dbReference type="GO" id="GO:0035999">
    <property type="term" value="P:tetrahydrofolate interconversion"/>
    <property type="evidence" value="ECO:0007669"/>
    <property type="project" value="UniProtKB-UniRule"/>
</dbReference>
<dbReference type="CDD" id="cd00477">
    <property type="entry name" value="FTHFS"/>
    <property type="match status" value="1"/>
</dbReference>
<dbReference type="FunFam" id="3.30.1510.10:FF:000001">
    <property type="entry name" value="Formate--tetrahydrofolate ligase"/>
    <property type="match status" value="1"/>
</dbReference>
<dbReference type="FunFam" id="3.10.410.10:FF:000001">
    <property type="entry name" value="Putative formate--tetrahydrofolate ligase"/>
    <property type="match status" value="1"/>
</dbReference>
<dbReference type="Gene3D" id="3.30.1510.10">
    <property type="entry name" value="Domain 2, N(10)-formyltetrahydrofolate synthetase"/>
    <property type="match status" value="1"/>
</dbReference>
<dbReference type="Gene3D" id="3.10.410.10">
    <property type="entry name" value="Formyltetrahydrofolate synthetase, domain 3"/>
    <property type="match status" value="1"/>
</dbReference>
<dbReference type="Gene3D" id="3.40.50.300">
    <property type="entry name" value="P-loop containing nucleotide triphosphate hydrolases"/>
    <property type="match status" value="1"/>
</dbReference>
<dbReference type="HAMAP" id="MF_01543">
    <property type="entry name" value="FTHFS"/>
    <property type="match status" value="1"/>
</dbReference>
<dbReference type="InterPro" id="IPR000559">
    <property type="entry name" value="Formate_THF_ligase"/>
</dbReference>
<dbReference type="InterPro" id="IPR020628">
    <property type="entry name" value="Formate_THF_ligase_CS"/>
</dbReference>
<dbReference type="InterPro" id="IPR027417">
    <property type="entry name" value="P-loop_NTPase"/>
</dbReference>
<dbReference type="NCBIfam" id="NF010030">
    <property type="entry name" value="PRK13505.1"/>
    <property type="match status" value="1"/>
</dbReference>
<dbReference type="Pfam" id="PF01268">
    <property type="entry name" value="FTHFS"/>
    <property type="match status" value="1"/>
</dbReference>
<dbReference type="SUPFAM" id="SSF52540">
    <property type="entry name" value="P-loop containing nucleoside triphosphate hydrolases"/>
    <property type="match status" value="1"/>
</dbReference>
<dbReference type="PROSITE" id="PS00721">
    <property type="entry name" value="FTHFS_1"/>
    <property type="match status" value="1"/>
</dbReference>
<dbReference type="PROSITE" id="PS00722">
    <property type="entry name" value="FTHFS_2"/>
    <property type="match status" value="1"/>
</dbReference>
<sequence length="555" mass="59856">MTHLSDLDIANQSTLQPIKDIAASVGISEDALEPYGHYKAKIDINKITPRENKGKVVLVTAMSPTPAGEGKSTVTVGLADAFHELNKNVMVALREPALGPTFGIKGGATGGGYAQVLPMEDINLHFNGDFHAITTANNALSAFIDNHIHQGNELGIDQRRIEWKRVLDMNDRALRHVNVGLGGPTNGVPREDGFNITVASEIMAILCLSRSIKDLKDKISRITIGYTRDRKPVTVADLKVQGALAMILKDAIKPNLVQSIEGTPALVHGGPFANIAHGCNSILATETARDLADIVVTEAGFGSDLGAEKFMDIKAREAGFDPAAVVVVATIRALKMHGGVAKDNLKEENVEAVKAGIVNLERHVNNIKKFGVEPVVAINAFIHDTDAEVEYVKSWAKENNVRIALTEVWEKGGKGGVDLANEVLEVIDQPNSFKPLYELELPLEQKIEKIVTEIYGGSKVTFSSKAQKQLKQFKENGWDNYPVCMAKTQYSFSDDQTLLGAPSGFEITIRELEAKTGAGFIVALTGAIMTMPGLPKKPAALNMDVTDDGHAIGLF</sequence>
<evidence type="ECO:0000255" key="1">
    <source>
        <dbReference type="HAMAP-Rule" id="MF_01543"/>
    </source>
</evidence>
<feature type="chain" id="PRO_0000199376" description="Formate--tetrahydrofolate ligase">
    <location>
        <begin position="1"/>
        <end position="555"/>
    </location>
</feature>
<feature type="binding site" evidence="1">
    <location>
        <begin position="65"/>
        <end position="72"/>
    </location>
    <ligand>
        <name>ATP</name>
        <dbReference type="ChEBI" id="CHEBI:30616"/>
    </ligand>
</feature>
<organism>
    <name type="scientific">Staphylococcus aureus (strain MRSA252)</name>
    <dbReference type="NCBI Taxonomy" id="282458"/>
    <lineage>
        <taxon>Bacteria</taxon>
        <taxon>Bacillati</taxon>
        <taxon>Bacillota</taxon>
        <taxon>Bacilli</taxon>
        <taxon>Bacillales</taxon>
        <taxon>Staphylococcaceae</taxon>
        <taxon>Staphylococcus</taxon>
    </lineage>
</organism>
<keyword id="KW-0067">ATP-binding</keyword>
<keyword id="KW-0436">Ligase</keyword>
<keyword id="KW-0547">Nucleotide-binding</keyword>
<keyword id="KW-0554">One-carbon metabolism</keyword>